<accession>Q7SGZ5</accession>
<sequence length="962" mass="102830">MGPFSSASDRNSAAATAAPATATATPSPLSKTPSAATSDDSSTSKKFLKRLNILPLRSRTRNIADFHIRPDDPHRKYSAGDHVQGAVVLTVVKPVRITHLTVLLHGYVRVYKGPGAQNNEPVRSPAEIKNISSRGERKKYYNGYASLFQDEQVLSSDGRLEPGRYEFNFDLLFPEKGLPSSIDFERGTISYMITATLTRPTSVAPTTSCERKIYLMEQLDVGPLAPPKAQTVDLRPISKRAKKKRPAGGDRRSVISSERLSADVPAESLSDGDSARINDTSTEGSLSIVGDDVGQEGFSQAPRSVSHSEVRSLSGDSAASLSTHPSRAYSETNQLAIVGSAMTGKRISFADERTIKLRVEVLKGGCLPGDVIPVKVSVNHIKMIKSMHGVIVTLFRQGRIDSSPLQLSKEDWKKSESDDYYYPKSRTGLSGLSLSSAGSCSMFRKDLSQAFAPLITDPVNFSATLTTSVRVPEDSFPTIKGVPGEMISFRYFVEVIVDLGGKLANHLQGGASSGSRVGATGVVGTPFENVGTLPSWGATGSTSILDTDRLKRIQGVIPGYYEVIVGTTDSNRSRGKGPQRPSLTHTPSVTGGSNYVENEYNEKGGWPNSMHDDDGYGPESANPHDDYASYPPQTTYPHGYVQQPPYWNYVPDSSQHEQAIPAPHYIPPPDLPDENSLTEKERIRRAEQRLLPSQPPIAAASSSSFSAAVPSPSASSHVPDSSLLLNGDNIYDAEDDVPTPAATPATASPFDHALAPVYTPTPAEDLPSAPTLEELDRPPPISRGPSHHPPSTTEDKQELERRRLLAEASAPPEFPEDYIPDEGGGPVTPAGPSGSRAGPSAPPPAPPVAFEPSAPVLFENDEDYHGGGYTAGGPSFPSAASGNGGHEEETVPEYTYNNHRPGSVGAVTVVGNPSSPVLAPASAFFPASGSGNVHDSPREQGQQARSDSSSPPPIEYLPRYER</sequence>
<feature type="chain" id="PRO_0000058192" description="pH-response regulator protein palF/prr-3">
    <location>
        <begin position="1"/>
        <end position="962"/>
    </location>
</feature>
<feature type="region of interest" description="Disordered" evidence="2">
    <location>
        <begin position="1"/>
        <end position="43"/>
    </location>
</feature>
<feature type="region of interest" description="Disordered" evidence="2">
    <location>
        <begin position="225"/>
        <end position="326"/>
    </location>
</feature>
<feature type="region of interest" description="Disordered" evidence="2">
    <location>
        <begin position="568"/>
        <end position="675"/>
    </location>
</feature>
<feature type="region of interest" description="Disordered" evidence="2">
    <location>
        <begin position="689"/>
        <end position="962"/>
    </location>
</feature>
<feature type="compositionally biased region" description="Basic residues" evidence="2">
    <location>
        <begin position="237"/>
        <end position="246"/>
    </location>
</feature>
<feature type="compositionally biased region" description="Polar residues" evidence="2">
    <location>
        <begin position="297"/>
        <end position="307"/>
    </location>
</feature>
<feature type="compositionally biased region" description="Polar residues" evidence="2">
    <location>
        <begin position="314"/>
        <end position="326"/>
    </location>
</feature>
<feature type="compositionally biased region" description="Polar residues" evidence="2">
    <location>
        <begin position="581"/>
        <end position="596"/>
    </location>
</feature>
<feature type="compositionally biased region" description="Low complexity" evidence="2">
    <location>
        <begin position="696"/>
        <end position="722"/>
    </location>
</feature>
<feature type="compositionally biased region" description="Low complexity" evidence="2">
    <location>
        <begin position="738"/>
        <end position="747"/>
    </location>
</feature>
<feature type="compositionally biased region" description="Basic and acidic residues" evidence="2">
    <location>
        <begin position="793"/>
        <end position="805"/>
    </location>
</feature>
<feature type="compositionally biased region" description="Low complexity" evidence="2">
    <location>
        <begin position="830"/>
        <end position="839"/>
    </location>
</feature>
<feature type="compositionally biased region" description="Pro residues" evidence="2">
    <location>
        <begin position="840"/>
        <end position="849"/>
    </location>
</feature>
<feature type="compositionally biased region" description="Low complexity" evidence="2">
    <location>
        <begin position="913"/>
        <end position="928"/>
    </location>
</feature>
<feature type="compositionally biased region" description="Polar residues" evidence="2">
    <location>
        <begin position="929"/>
        <end position="949"/>
    </location>
</feature>
<evidence type="ECO:0000250" key="1"/>
<evidence type="ECO:0000256" key="2">
    <source>
        <dbReference type="SAM" id="MobiDB-lite"/>
    </source>
</evidence>
<evidence type="ECO:0000305" key="3"/>
<comment type="function">
    <text evidence="1">Required for the proteolytic cleavage of the transcription factor pacc-1 in response to alkaline ambient pH.</text>
</comment>
<comment type="similarity">
    <text evidence="3">Belongs to the arrestin family. PalF/RIM8 subfamily.</text>
</comment>
<comment type="sequence caution" evidence="3">
    <conflict type="erroneous gene model prediction">
        <sequence resource="EMBL-CDS" id="CAE76272"/>
    </conflict>
</comment>
<keyword id="KW-1185">Reference proteome</keyword>
<protein>
    <recommendedName>
        <fullName>pH-response regulator protein palF/prr-3</fullName>
    </recommendedName>
    <alternativeName>
        <fullName>pH-response regulator 3</fullName>
    </alternativeName>
</protein>
<name>PALF_NEUCR</name>
<proteinExistence type="inferred from homology"/>
<organism>
    <name type="scientific">Neurospora crassa (strain ATCC 24698 / 74-OR23-1A / CBS 708.71 / DSM 1257 / FGSC 987)</name>
    <dbReference type="NCBI Taxonomy" id="367110"/>
    <lineage>
        <taxon>Eukaryota</taxon>
        <taxon>Fungi</taxon>
        <taxon>Dikarya</taxon>
        <taxon>Ascomycota</taxon>
        <taxon>Pezizomycotina</taxon>
        <taxon>Sordariomycetes</taxon>
        <taxon>Sordariomycetidae</taxon>
        <taxon>Sordariales</taxon>
        <taxon>Sordariaceae</taxon>
        <taxon>Neurospora</taxon>
    </lineage>
</organism>
<reference key="1">
    <citation type="journal article" date="2003" name="Nucleic Acids Res.">
        <title>What's in the genome of a filamentous fungus? Analysis of the Neurospora genome sequence.</title>
        <authorList>
            <person name="Mannhaupt G."/>
            <person name="Montrone C."/>
            <person name="Haase D."/>
            <person name="Mewes H.-W."/>
            <person name="Aign V."/>
            <person name="Hoheisel J.D."/>
            <person name="Fartmann B."/>
            <person name="Nyakatura G."/>
            <person name="Kempken F."/>
            <person name="Maier J."/>
            <person name="Schulte U."/>
        </authorList>
    </citation>
    <scope>NUCLEOTIDE SEQUENCE [LARGE SCALE GENOMIC DNA]</scope>
    <source>
        <strain>ATCC 24698 / 74-OR23-1A / CBS 708.71 / DSM 1257 / FGSC 987</strain>
    </source>
</reference>
<reference key="2">
    <citation type="journal article" date="2003" name="Nature">
        <title>The genome sequence of the filamentous fungus Neurospora crassa.</title>
        <authorList>
            <person name="Galagan J.E."/>
            <person name="Calvo S.E."/>
            <person name="Borkovich K.A."/>
            <person name="Selker E.U."/>
            <person name="Read N.D."/>
            <person name="Jaffe D.B."/>
            <person name="FitzHugh W."/>
            <person name="Ma L.-J."/>
            <person name="Smirnov S."/>
            <person name="Purcell S."/>
            <person name="Rehman B."/>
            <person name="Elkins T."/>
            <person name="Engels R."/>
            <person name="Wang S."/>
            <person name="Nielsen C.B."/>
            <person name="Butler J."/>
            <person name="Endrizzi M."/>
            <person name="Qui D."/>
            <person name="Ianakiev P."/>
            <person name="Bell-Pedersen D."/>
            <person name="Nelson M.A."/>
            <person name="Werner-Washburne M."/>
            <person name="Selitrennikoff C.P."/>
            <person name="Kinsey J.A."/>
            <person name="Braun E.L."/>
            <person name="Zelter A."/>
            <person name="Schulte U."/>
            <person name="Kothe G.O."/>
            <person name="Jedd G."/>
            <person name="Mewes H.-W."/>
            <person name="Staben C."/>
            <person name="Marcotte E."/>
            <person name="Greenberg D."/>
            <person name="Roy A."/>
            <person name="Foley K."/>
            <person name="Naylor J."/>
            <person name="Stange-Thomann N."/>
            <person name="Barrett R."/>
            <person name="Gnerre S."/>
            <person name="Kamal M."/>
            <person name="Kamvysselis M."/>
            <person name="Mauceli E.W."/>
            <person name="Bielke C."/>
            <person name="Rudd S."/>
            <person name="Frishman D."/>
            <person name="Krystofova S."/>
            <person name="Rasmussen C."/>
            <person name="Metzenberg R.L."/>
            <person name="Perkins D.D."/>
            <person name="Kroken S."/>
            <person name="Cogoni C."/>
            <person name="Macino G."/>
            <person name="Catcheside D.E.A."/>
            <person name="Li W."/>
            <person name="Pratt R.J."/>
            <person name="Osmani S.A."/>
            <person name="DeSouza C.P.C."/>
            <person name="Glass N.L."/>
            <person name="Orbach M.J."/>
            <person name="Berglund J.A."/>
            <person name="Voelker R."/>
            <person name="Yarden O."/>
            <person name="Plamann M."/>
            <person name="Seiler S."/>
            <person name="Dunlap J.C."/>
            <person name="Radford A."/>
            <person name="Aramayo R."/>
            <person name="Natvig D.O."/>
            <person name="Alex L.A."/>
            <person name="Mannhaupt G."/>
            <person name="Ebbole D.J."/>
            <person name="Freitag M."/>
            <person name="Paulsen I."/>
            <person name="Sachs M.S."/>
            <person name="Lander E.S."/>
            <person name="Nusbaum C."/>
            <person name="Birren B.W."/>
        </authorList>
    </citation>
    <scope>NUCLEOTIDE SEQUENCE [LARGE SCALE GENOMIC DNA]</scope>
    <source>
        <strain>ATCC 24698 / 74-OR23-1A / CBS 708.71 / DSM 1257 / FGSC 987</strain>
    </source>
</reference>
<gene>
    <name type="primary">prr-3</name>
    <name type="synonym">rim8</name>
    <name type="ORF">B18P24.140</name>
    <name type="ORF">NCU03021</name>
</gene>
<dbReference type="EMBL" id="BX842626">
    <property type="protein sequence ID" value="CAE76272.1"/>
    <property type="status" value="ALT_SEQ"/>
    <property type="molecule type" value="Genomic_DNA"/>
</dbReference>
<dbReference type="EMBL" id="CM002236">
    <property type="protein sequence ID" value="EAA36171.2"/>
    <property type="molecule type" value="Genomic_DNA"/>
</dbReference>
<dbReference type="RefSeq" id="XP_965407.2">
    <property type="nucleotide sequence ID" value="XM_960314.2"/>
</dbReference>
<dbReference type="FunCoup" id="Q7SGZ5">
    <property type="interactions" value="16"/>
</dbReference>
<dbReference type="STRING" id="367110.Q7SGZ5"/>
<dbReference type="PaxDb" id="5141-EFNCRP00000002470"/>
<dbReference type="EnsemblFungi" id="EAA36171">
    <property type="protein sequence ID" value="EAA36171"/>
    <property type="gene ID" value="NCU03021"/>
</dbReference>
<dbReference type="GeneID" id="3881557"/>
<dbReference type="KEGG" id="ncr:NCU03021"/>
<dbReference type="VEuPathDB" id="FungiDB:NCU03021"/>
<dbReference type="HOGENOM" id="CLU_006001_0_0_1"/>
<dbReference type="InParanoid" id="Q7SGZ5"/>
<dbReference type="OrthoDB" id="7785529at2759"/>
<dbReference type="Proteomes" id="UP000001805">
    <property type="component" value="Chromosome 1, Linkage Group I"/>
</dbReference>
<dbReference type="GO" id="GO:0005737">
    <property type="term" value="C:cytoplasm"/>
    <property type="evidence" value="ECO:0000318"/>
    <property type="project" value="GO_Central"/>
</dbReference>
<dbReference type="GO" id="GO:0005829">
    <property type="term" value="C:cytosol"/>
    <property type="evidence" value="ECO:0000318"/>
    <property type="project" value="GO_Central"/>
</dbReference>
<dbReference type="GO" id="GO:0005886">
    <property type="term" value="C:plasma membrane"/>
    <property type="evidence" value="ECO:0000318"/>
    <property type="project" value="GO_Central"/>
</dbReference>
<dbReference type="GO" id="GO:0030674">
    <property type="term" value="F:protein-macromolecule adaptor activity"/>
    <property type="evidence" value="ECO:0000318"/>
    <property type="project" value="GO_Central"/>
</dbReference>
<dbReference type="GO" id="GO:0031625">
    <property type="term" value="F:ubiquitin protein ligase binding"/>
    <property type="evidence" value="ECO:0000318"/>
    <property type="project" value="GO_Central"/>
</dbReference>
<dbReference type="GO" id="GO:0070086">
    <property type="term" value="P:ubiquitin-dependent endocytosis"/>
    <property type="evidence" value="ECO:0000318"/>
    <property type="project" value="GO_Central"/>
</dbReference>
<dbReference type="Gene3D" id="2.60.40.640">
    <property type="match status" value="1"/>
</dbReference>
<dbReference type="InterPro" id="IPR014752">
    <property type="entry name" value="Arrestin-like_C"/>
</dbReference>
<dbReference type="InterPro" id="IPR011021">
    <property type="entry name" value="Arrestin-like_N"/>
</dbReference>
<dbReference type="InterPro" id="IPR011022">
    <property type="entry name" value="Arrestin_C-like"/>
</dbReference>
<dbReference type="InterPro" id="IPR050357">
    <property type="entry name" value="Arrestin_domain-protein"/>
</dbReference>
<dbReference type="InterPro" id="IPR014756">
    <property type="entry name" value="Ig_E-set"/>
</dbReference>
<dbReference type="PANTHER" id="PTHR11188">
    <property type="entry name" value="ARRESTIN DOMAIN CONTAINING PROTEIN"/>
    <property type="match status" value="1"/>
</dbReference>
<dbReference type="PANTHER" id="PTHR11188:SF161">
    <property type="entry name" value="PH-RESPONSE REGULATOR PROTEIN PALF_RIM8"/>
    <property type="match status" value="1"/>
</dbReference>
<dbReference type="Pfam" id="PF02752">
    <property type="entry name" value="Arrestin_C"/>
    <property type="match status" value="1"/>
</dbReference>
<dbReference type="Pfam" id="PF00339">
    <property type="entry name" value="Arrestin_N"/>
    <property type="match status" value="1"/>
</dbReference>
<dbReference type="SMART" id="SM01017">
    <property type="entry name" value="Arrestin_C"/>
    <property type="match status" value="1"/>
</dbReference>
<dbReference type="SUPFAM" id="SSF81296">
    <property type="entry name" value="E set domains"/>
    <property type="match status" value="1"/>
</dbReference>